<organism>
    <name type="scientific">Chlamydia abortus (strain DSM 27085 / S26/3)</name>
    <name type="common">Chlamydophila abortus</name>
    <dbReference type="NCBI Taxonomy" id="218497"/>
    <lineage>
        <taxon>Bacteria</taxon>
        <taxon>Pseudomonadati</taxon>
        <taxon>Chlamydiota</taxon>
        <taxon>Chlamydiia</taxon>
        <taxon>Chlamydiales</taxon>
        <taxon>Chlamydiaceae</taxon>
        <taxon>Chlamydia/Chlamydophila group</taxon>
        <taxon>Chlamydia</taxon>
    </lineage>
</organism>
<evidence type="ECO:0000255" key="1">
    <source>
        <dbReference type="HAMAP-Rule" id="MF_01369"/>
    </source>
</evidence>
<evidence type="ECO:0000305" key="2"/>
<protein>
    <recommendedName>
        <fullName evidence="1">Large ribosomal subunit protein uL23</fullName>
    </recommendedName>
    <alternativeName>
        <fullName evidence="2">50S ribosomal protein L23</fullName>
    </alternativeName>
</protein>
<gene>
    <name evidence="1" type="primary">rplW</name>
    <name type="ordered locus">CAB095</name>
</gene>
<proteinExistence type="inferred from homology"/>
<comment type="function">
    <text evidence="1">One of the early assembly proteins it binds 23S rRNA. One of the proteins that surrounds the polypeptide exit tunnel on the outside of the ribosome. Forms the main docking site for trigger factor binding to the ribosome.</text>
</comment>
<comment type="subunit">
    <text evidence="1">Part of the 50S ribosomal subunit. Contacts protein L29, and trigger factor when it is bound to the ribosome.</text>
</comment>
<comment type="similarity">
    <text evidence="1">Belongs to the universal ribosomal protein uL23 family.</text>
</comment>
<reference key="1">
    <citation type="journal article" date="2005" name="Genome Res.">
        <title>The Chlamydophila abortus genome sequence reveals an array of variable proteins that contribute to interspecies variation.</title>
        <authorList>
            <person name="Thomson N.R."/>
            <person name="Yeats C."/>
            <person name="Bell K."/>
            <person name="Holden M.T.G."/>
            <person name="Bentley S.D."/>
            <person name="Livingstone M."/>
            <person name="Cerdeno-Tarraga A.-M."/>
            <person name="Harris B."/>
            <person name="Doggett J."/>
            <person name="Ormond D."/>
            <person name="Mungall K."/>
            <person name="Clarke K."/>
            <person name="Feltwell T."/>
            <person name="Hance Z."/>
            <person name="Sanders M."/>
            <person name="Quail M.A."/>
            <person name="Price C."/>
            <person name="Barrell B.G."/>
            <person name="Parkhill J."/>
            <person name="Longbottom D."/>
        </authorList>
    </citation>
    <scope>NUCLEOTIDE SEQUENCE [LARGE SCALE GENOMIC DNA]</scope>
    <source>
        <strain>DSM 27085 / S26/3</strain>
    </source>
</reference>
<name>RL23_CHLAB</name>
<accession>Q5L718</accession>
<keyword id="KW-0687">Ribonucleoprotein</keyword>
<keyword id="KW-0689">Ribosomal protein</keyword>
<keyword id="KW-0694">RNA-binding</keyword>
<keyword id="KW-0699">rRNA-binding</keyword>
<feature type="chain" id="PRO_1000068057" description="Large ribosomal subunit protein uL23">
    <location>
        <begin position="1"/>
        <end position="111"/>
    </location>
</feature>
<dbReference type="EMBL" id="CR848038">
    <property type="protein sequence ID" value="CAH63552.1"/>
    <property type="molecule type" value="Genomic_DNA"/>
</dbReference>
<dbReference type="RefSeq" id="WP_006343767.1">
    <property type="nucleotide sequence ID" value="NC_004552.2"/>
</dbReference>
<dbReference type="SMR" id="Q5L718"/>
<dbReference type="KEGG" id="cab:CAB095"/>
<dbReference type="eggNOG" id="COG0089">
    <property type="taxonomic scope" value="Bacteria"/>
</dbReference>
<dbReference type="HOGENOM" id="CLU_037562_3_1_0"/>
<dbReference type="OrthoDB" id="9793353at2"/>
<dbReference type="Proteomes" id="UP000001012">
    <property type="component" value="Chromosome"/>
</dbReference>
<dbReference type="GO" id="GO:1990904">
    <property type="term" value="C:ribonucleoprotein complex"/>
    <property type="evidence" value="ECO:0007669"/>
    <property type="project" value="UniProtKB-KW"/>
</dbReference>
<dbReference type="GO" id="GO:0005840">
    <property type="term" value="C:ribosome"/>
    <property type="evidence" value="ECO:0007669"/>
    <property type="project" value="UniProtKB-KW"/>
</dbReference>
<dbReference type="GO" id="GO:0019843">
    <property type="term" value="F:rRNA binding"/>
    <property type="evidence" value="ECO:0007669"/>
    <property type="project" value="UniProtKB-UniRule"/>
</dbReference>
<dbReference type="GO" id="GO:0003735">
    <property type="term" value="F:structural constituent of ribosome"/>
    <property type="evidence" value="ECO:0007669"/>
    <property type="project" value="InterPro"/>
</dbReference>
<dbReference type="GO" id="GO:0006412">
    <property type="term" value="P:translation"/>
    <property type="evidence" value="ECO:0007669"/>
    <property type="project" value="UniProtKB-UniRule"/>
</dbReference>
<dbReference type="Gene3D" id="3.30.70.330">
    <property type="match status" value="1"/>
</dbReference>
<dbReference type="HAMAP" id="MF_01369_B">
    <property type="entry name" value="Ribosomal_uL23_B"/>
    <property type="match status" value="1"/>
</dbReference>
<dbReference type="InterPro" id="IPR012677">
    <property type="entry name" value="Nucleotide-bd_a/b_plait_sf"/>
</dbReference>
<dbReference type="InterPro" id="IPR013025">
    <property type="entry name" value="Ribosomal_uL23-like"/>
</dbReference>
<dbReference type="InterPro" id="IPR012678">
    <property type="entry name" value="Ribosomal_uL23/eL15/eS24_sf"/>
</dbReference>
<dbReference type="NCBIfam" id="NF004362">
    <property type="entry name" value="PRK05738.2-2"/>
    <property type="match status" value="1"/>
</dbReference>
<dbReference type="Pfam" id="PF00276">
    <property type="entry name" value="Ribosomal_L23"/>
    <property type="match status" value="1"/>
</dbReference>
<dbReference type="SUPFAM" id="SSF54189">
    <property type="entry name" value="Ribosomal proteins S24e, L23 and L15e"/>
    <property type="match status" value="1"/>
</dbReference>
<sequence length="111" mass="12350">MKDPYDVIKRHYVTEKAKTLEGLSLGNGEGKKKGSYCKHPKYTFIVDSNATKPLIAQALESIYADKKVKVKSVNTICVKPQPARMFRGKRKGKTAGFKKAVVTFYEGHSIG</sequence>